<accession>P26158</accession>
<protein>
    <recommendedName>
        <fullName>Uncharacterized 30.4 kDa protein in puhA 5'region</fullName>
    </recommendedName>
    <alternativeName>
        <fullName>ORF274</fullName>
    </alternativeName>
</protein>
<feature type="chain" id="PRO_0000066420" description="Uncharacterized 30.4 kDa protein in puhA 5'region">
    <location>
        <begin position="1"/>
        <end position="274"/>
    </location>
</feature>
<proteinExistence type="predicted"/>
<name>YPU2_RHOCA</name>
<reference key="1">
    <citation type="submission" date="1991-11" db="EMBL/GenBank/DDBJ databases">
        <authorList>
            <person name="Burke D.H."/>
            <person name="Alberti M."/>
            <person name="Armstrong G.A."/>
            <person name="Hearst J.E."/>
        </authorList>
    </citation>
    <scope>NUCLEOTIDE SEQUENCE [GENOMIC DNA]</scope>
</reference>
<dbReference type="EMBL" id="Z11165">
    <property type="protein sequence ID" value="CAA77516.1"/>
    <property type="molecule type" value="Genomic_DNA"/>
</dbReference>
<dbReference type="PIR" id="S17804">
    <property type="entry name" value="S17804"/>
</dbReference>
<dbReference type="InterPro" id="IPR017496">
    <property type="entry name" value="Photo_alph_chp2"/>
</dbReference>
<dbReference type="NCBIfam" id="TIGR03055">
    <property type="entry name" value="photo_alph_chp2"/>
    <property type="match status" value="1"/>
</dbReference>
<dbReference type="Pfam" id="PF12291">
    <property type="entry name" value="DUF3623"/>
    <property type="match status" value="1"/>
</dbReference>
<sequence>MNNPWLVALTTIFVWWFSTGAILWRIRRADLSGRAAHMRSVVGGLPLLIGGYIAMANSADDSSVRGAHVAFLSAVSVWGWFELAFLSGVVAGPNRDHCPPFASMTERFLRSVGTLLWHEIGLISALILCAVLVWTGENHFGLWTFATLFFARVSAKLNLFLGVPRINTQFLPKPLAHLASHFRHARMNFLFPVSITVLTFATGCWMERAADAQTDGIFIGFVLLTVLTALALLEHWFMVLPLPDQKLWTWMLPSVEDPAETVAEPVPGRIPVGE</sequence>
<organism>
    <name type="scientific">Rhodobacter capsulatus</name>
    <name type="common">Rhodopseudomonas capsulata</name>
    <dbReference type="NCBI Taxonomy" id="1061"/>
    <lineage>
        <taxon>Bacteria</taxon>
        <taxon>Pseudomonadati</taxon>
        <taxon>Pseudomonadota</taxon>
        <taxon>Alphaproteobacteria</taxon>
        <taxon>Rhodobacterales</taxon>
        <taxon>Rhodobacter group</taxon>
        <taxon>Rhodobacter</taxon>
    </lineage>
</organism>